<comment type="similarity">
    <text evidence="1">Belongs to the bacterial ribosomal protein bL28 family.</text>
</comment>
<sequence>MAKVCMVTGKRPISGNNVSHANNKTRRRFYPNLHKHRFWVESENRFVKLKLSAKGFRIIDKKGINIVLTEIRARGKFKESSL</sequence>
<protein>
    <recommendedName>
        <fullName evidence="1">Large ribosomal subunit protein bL28</fullName>
    </recommendedName>
    <alternativeName>
        <fullName evidence="2">50S ribosomal protein L28</fullName>
    </alternativeName>
</protein>
<gene>
    <name evidence="1" type="primary">rpmB</name>
    <name type="ordered locus">COSY_0889</name>
</gene>
<evidence type="ECO:0000255" key="1">
    <source>
        <dbReference type="HAMAP-Rule" id="MF_00373"/>
    </source>
</evidence>
<evidence type="ECO:0000305" key="2"/>
<accession>A5CVN4</accession>
<name>RL28_VESOH</name>
<feature type="chain" id="PRO_1000007399" description="Large ribosomal subunit protein bL28">
    <location>
        <begin position="1"/>
        <end position="82"/>
    </location>
</feature>
<organism>
    <name type="scientific">Vesicomyosocius okutanii subsp. Calyptogena okutanii (strain HA)</name>
    <dbReference type="NCBI Taxonomy" id="412965"/>
    <lineage>
        <taxon>Bacteria</taxon>
        <taxon>Pseudomonadati</taxon>
        <taxon>Pseudomonadota</taxon>
        <taxon>Gammaproteobacteria</taxon>
        <taxon>Candidatus Pseudothioglobaceae</taxon>
        <taxon>Candidatus Vesicomyosocius</taxon>
    </lineage>
</organism>
<keyword id="KW-1185">Reference proteome</keyword>
<keyword id="KW-0687">Ribonucleoprotein</keyword>
<keyword id="KW-0689">Ribosomal protein</keyword>
<dbReference type="EMBL" id="AP009247">
    <property type="protein sequence ID" value="BAF61994.1"/>
    <property type="molecule type" value="Genomic_DNA"/>
</dbReference>
<dbReference type="RefSeq" id="WP_011930263.1">
    <property type="nucleotide sequence ID" value="NC_009465.1"/>
</dbReference>
<dbReference type="SMR" id="A5CVN4"/>
<dbReference type="STRING" id="412965.COSY_0889"/>
<dbReference type="KEGG" id="vok:COSY_0889"/>
<dbReference type="eggNOG" id="COG0227">
    <property type="taxonomic scope" value="Bacteria"/>
</dbReference>
<dbReference type="HOGENOM" id="CLU_064548_3_1_6"/>
<dbReference type="OrthoDB" id="9805609at2"/>
<dbReference type="Proteomes" id="UP000000247">
    <property type="component" value="Chromosome"/>
</dbReference>
<dbReference type="GO" id="GO:0022625">
    <property type="term" value="C:cytosolic large ribosomal subunit"/>
    <property type="evidence" value="ECO:0007669"/>
    <property type="project" value="TreeGrafter"/>
</dbReference>
<dbReference type="GO" id="GO:0003735">
    <property type="term" value="F:structural constituent of ribosome"/>
    <property type="evidence" value="ECO:0007669"/>
    <property type="project" value="InterPro"/>
</dbReference>
<dbReference type="GO" id="GO:0006412">
    <property type="term" value="P:translation"/>
    <property type="evidence" value="ECO:0007669"/>
    <property type="project" value="UniProtKB-UniRule"/>
</dbReference>
<dbReference type="FunFam" id="2.30.170.40:FF:000001">
    <property type="entry name" value="50S ribosomal protein L28"/>
    <property type="match status" value="1"/>
</dbReference>
<dbReference type="Gene3D" id="2.30.170.40">
    <property type="entry name" value="Ribosomal protein L28/L24"/>
    <property type="match status" value="1"/>
</dbReference>
<dbReference type="HAMAP" id="MF_00373">
    <property type="entry name" value="Ribosomal_bL28"/>
    <property type="match status" value="1"/>
</dbReference>
<dbReference type="InterPro" id="IPR026569">
    <property type="entry name" value="Ribosomal_bL28"/>
</dbReference>
<dbReference type="InterPro" id="IPR034704">
    <property type="entry name" value="Ribosomal_bL28/bL31-like_sf"/>
</dbReference>
<dbReference type="InterPro" id="IPR001383">
    <property type="entry name" value="Ribosomal_bL28_bact-type"/>
</dbReference>
<dbReference type="InterPro" id="IPR037147">
    <property type="entry name" value="Ribosomal_bL28_sf"/>
</dbReference>
<dbReference type="NCBIfam" id="TIGR00009">
    <property type="entry name" value="L28"/>
    <property type="match status" value="1"/>
</dbReference>
<dbReference type="PANTHER" id="PTHR13528">
    <property type="entry name" value="39S RIBOSOMAL PROTEIN L28, MITOCHONDRIAL"/>
    <property type="match status" value="1"/>
</dbReference>
<dbReference type="PANTHER" id="PTHR13528:SF2">
    <property type="entry name" value="LARGE RIBOSOMAL SUBUNIT PROTEIN BL28M"/>
    <property type="match status" value="1"/>
</dbReference>
<dbReference type="Pfam" id="PF00830">
    <property type="entry name" value="Ribosomal_L28"/>
    <property type="match status" value="1"/>
</dbReference>
<dbReference type="SUPFAM" id="SSF143800">
    <property type="entry name" value="L28p-like"/>
    <property type="match status" value="1"/>
</dbReference>
<reference key="1">
    <citation type="journal article" date="2007" name="Curr. Biol.">
        <title>Reduced genome of the thioautotrophic intracellular symbiont in a deep-sea clam, Calyptogena okutanii.</title>
        <authorList>
            <person name="Kuwahara H."/>
            <person name="Yoshida T."/>
            <person name="Takaki Y."/>
            <person name="Shimamura S."/>
            <person name="Nishi S."/>
            <person name="Harada M."/>
            <person name="Matsuyama K."/>
            <person name="Takishita K."/>
            <person name="Kawato M."/>
            <person name="Uematsu K."/>
            <person name="Fujiwara Y."/>
            <person name="Sato T."/>
            <person name="Kato C."/>
            <person name="Kitagawa M."/>
            <person name="Kato I."/>
            <person name="Maruyama T."/>
        </authorList>
    </citation>
    <scope>NUCLEOTIDE SEQUENCE [LARGE SCALE GENOMIC DNA]</scope>
    <source>
        <strain>HA</strain>
    </source>
</reference>
<proteinExistence type="inferred from homology"/>